<comment type="catalytic activity">
    <reaction>
        <text>Endohydrolysis of (1-&gt;4)-beta-D-glucosidic linkages in cellulose, lichenin and cereal beta-D-glucans.</text>
        <dbReference type="EC" id="3.2.1.4"/>
    </reaction>
</comment>
<comment type="similarity">
    <text evidence="5">Belongs to the glycosyl hydrolase 5 (cellulase A) family.</text>
</comment>
<proteinExistence type="evidence at protein level"/>
<reference key="1">
    <citation type="journal article" date="1989" name="J. Bacteriol.">
        <title>Structure of a Ruminococcus albus endo-1,4-beta-glucanase gene.</title>
        <authorList>
            <person name="Ohmiya K."/>
            <person name="Kajino T."/>
            <person name="Kato A."/>
            <person name="Shimizu S."/>
        </authorList>
    </citation>
    <scope>NUCLEOTIDE SEQUENCE [GENOMIC DNA]</scope>
    <scope>PROTEIN SEQUENCE OF 44-58</scope>
    <source>
        <strain>F-40</strain>
    </source>
</reference>
<reference key="2">
    <citation type="journal article" date="1991" name="J. Bacteriol.">
        <title>Modification of the properties of a Ruminococcus albus endo-1,4-beta-glucanase by gene truncation.</title>
        <authorList>
            <person name="Ohmiya K."/>
            <person name="Deguchi H."/>
            <person name="Shimizu S."/>
        </authorList>
    </citation>
    <scope>PROTEIN SEQUENCE OF 44-70</scope>
</reference>
<name>GUN1_RUMAL</name>
<organism>
    <name type="scientific">Ruminococcus albus</name>
    <dbReference type="NCBI Taxonomy" id="1264"/>
    <lineage>
        <taxon>Bacteria</taxon>
        <taxon>Bacillati</taxon>
        <taxon>Bacillota</taxon>
        <taxon>Clostridia</taxon>
        <taxon>Eubacteriales</taxon>
        <taxon>Oscillospiraceae</taxon>
        <taxon>Ruminococcus</taxon>
    </lineage>
</organism>
<accession>P16216</accession>
<keyword id="KW-0119">Carbohydrate metabolism</keyword>
<keyword id="KW-0136">Cellulose degradation</keyword>
<keyword id="KW-0903">Direct protein sequencing</keyword>
<keyword id="KW-0326">Glycosidase</keyword>
<keyword id="KW-0378">Hydrolase</keyword>
<keyword id="KW-0624">Polysaccharide degradation</keyword>
<keyword id="KW-0732">Signal</keyword>
<sequence>MNSKKIGAMIAAAVLSLIVMTPAATRKIVQRQTRNSSTAVENSAADESETENVPVSQTHTNDTMTVTSAKDLVAKMTNGWNLGNTMDATAQGLGSEVSWLPLKVTTNKYMIDMLPEAGFNVLRIPVSWGNHIIDDKYTSDPAWMDRVQEIVNYGIDNGLYVILNTHHEEWYMPKPSEKDGDIEEIKAVWAQIADRFKGYDEHLIFEGLNEPRLRGEGAEWTGTSEAREIINEYEKAFVETVRASGGNNGDRCLMITGYAASSAYNNLSAIELPEDSDKLIISVHAYLPYSFALDTKGTDKYDPEDTAIPELFEHLNELFISKGIPVIVGEFGTMNKENTEDRVKCLEDYLAAAAKYDIPCVWWDNYARIGNGENFGLMNRADLEWYFPDLIETFKTYAEKDPASAE</sequence>
<dbReference type="EC" id="3.2.1.4"/>
<dbReference type="EMBL" id="M30928">
    <property type="protein sequence ID" value="AAA26469.1"/>
    <property type="molecule type" value="Genomic_DNA"/>
</dbReference>
<dbReference type="PIR" id="A43722">
    <property type="entry name" value="A43722"/>
</dbReference>
<dbReference type="SMR" id="P16216"/>
<dbReference type="CAZy" id="GH5">
    <property type="family name" value="Glycoside Hydrolase Family 5"/>
</dbReference>
<dbReference type="GO" id="GO:0009986">
    <property type="term" value="C:cell surface"/>
    <property type="evidence" value="ECO:0007669"/>
    <property type="project" value="TreeGrafter"/>
</dbReference>
<dbReference type="GO" id="GO:0005576">
    <property type="term" value="C:extracellular region"/>
    <property type="evidence" value="ECO:0007669"/>
    <property type="project" value="TreeGrafter"/>
</dbReference>
<dbReference type="GO" id="GO:0008422">
    <property type="term" value="F:beta-glucosidase activity"/>
    <property type="evidence" value="ECO:0007669"/>
    <property type="project" value="TreeGrafter"/>
</dbReference>
<dbReference type="GO" id="GO:0008810">
    <property type="term" value="F:cellulase activity"/>
    <property type="evidence" value="ECO:0007669"/>
    <property type="project" value="UniProtKB-EC"/>
</dbReference>
<dbReference type="GO" id="GO:0030245">
    <property type="term" value="P:cellulose catabolic process"/>
    <property type="evidence" value="ECO:0007669"/>
    <property type="project" value="UniProtKB-KW"/>
</dbReference>
<dbReference type="Gene3D" id="3.20.20.80">
    <property type="entry name" value="Glycosidases"/>
    <property type="match status" value="1"/>
</dbReference>
<dbReference type="InterPro" id="IPR001547">
    <property type="entry name" value="Glyco_hydro_5"/>
</dbReference>
<dbReference type="InterPro" id="IPR018087">
    <property type="entry name" value="Glyco_hydro_5_CS"/>
</dbReference>
<dbReference type="InterPro" id="IPR017853">
    <property type="entry name" value="Glycoside_hydrolase_SF"/>
</dbReference>
<dbReference type="InterPro" id="IPR050386">
    <property type="entry name" value="Glycosyl_hydrolase_5"/>
</dbReference>
<dbReference type="PANTHER" id="PTHR31297:SF41">
    <property type="entry name" value="ENDOGLUCANASE, PUTATIVE (AFU_ORTHOLOGUE AFUA_5G01830)-RELATED"/>
    <property type="match status" value="1"/>
</dbReference>
<dbReference type="PANTHER" id="PTHR31297">
    <property type="entry name" value="GLUCAN ENDO-1,6-BETA-GLUCOSIDASE B"/>
    <property type="match status" value="1"/>
</dbReference>
<dbReference type="Pfam" id="PF00150">
    <property type="entry name" value="Cellulase"/>
    <property type="match status" value="1"/>
</dbReference>
<dbReference type="SUPFAM" id="SSF51445">
    <property type="entry name" value="(Trans)glycosidases"/>
    <property type="match status" value="1"/>
</dbReference>
<dbReference type="PROSITE" id="PS00659">
    <property type="entry name" value="GLYCOSYL_HYDROL_F5"/>
    <property type="match status" value="1"/>
</dbReference>
<protein>
    <recommendedName>
        <fullName>Endoglucanase 1</fullName>
        <ecNumber>3.2.1.4</ecNumber>
    </recommendedName>
    <alternativeName>
        <fullName>Cellulase</fullName>
    </alternativeName>
    <alternativeName>
        <fullName>Endo-1,4-beta-glucanase</fullName>
    </alternativeName>
    <alternativeName>
        <fullName>Endoglucanase I</fullName>
        <shortName>EG-I</shortName>
    </alternativeName>
</protein>
<evidence type="ECO:0000250" key="1"/>
<evidence type="ECO:0000256" key="2">
    <source>
        <dbReference type="SAM" id="MobiDB-lite"/>
    </source>
</evidence>
<evidence type="ECO:0000269" key="3">
    <source>
    </source>
</evidence>
<evidence type="ECO:0000269" key="4">
    <source>
    </source>
</evidence>
<evidence type="ECO:0000305" key="5"/>
<gene>
    <name type="primary">Eg I</name>
</gene>
<feature type="signal peptide" evidence="3 4">
    <location>
        <begin position="1"/>
        <end position="43"/>
    </location>
</feature>
<feature type="chain" id="PRO_0000007871" description="Endoglucanase 1">
    <location>
        <begin position="44"/>
        <end position="406"/>
    </location>
</feature>
<feature type="region of interest" description="Disordered" evidence="2">
    <location>
        <begin position="30"/>
        <end position="62"/>
    </location>
</feature>
<feature type="compositionally biased region" description="Polar residues" evidence="2">
    <location>
        <begin position="30"/>
        <end position="41"/>
    </location>
</feature>
<feature type="compositionally biased region" description="Polar residues" evidence="2">
    <location>
        <begin position="51"/>
        <end position="62"/>
    </location>
</feature>
<feature type="active site" description="Proton donor" evidence="1">
    <location>
        <position position="210"/>
    </location>
</feature>
<feature type="active site" description="Nucleophile" evidence="1">
    <location>
        <position position="330"/>
    </location>
</feature>